<proteinExistence type="inferred from homology"/>
<dbReference type="EMBL" id="X75587">
    <property type="protein sequence ID" value="CAA53263.1"/>
    <property type="molecule type" value="Genomic_DNA"/>
</dbReference>
<dbReference type="EMBL" id="DQ095151">
    <property type="protein sequence ID" value="AAZ05878.1"/>
    <property type="molecule type" value="Genomic_DNA"/>
</dbReference>
<dbReference type="EMBL" id="AY398662">
    <property type="protein sequence ID" value="AAR33052.1"/>
    <property type="molecule type" value="Genomic_DNA"/>
</dbReference>
<dbReference type="PIR" id="S43265">
    <property type="entry name" value="S43265"/>
</dbReference>
<dbReference type="SMR" id="Q4FBI3"/>
<dbReference type="GO" id="GO:0005743">
    <property type="term" value="C:mitochondrial inner membrane"/>
    <property type="evidence" value="ECO:0007669"/>
    <property type="project" value="UniProtKB-SubCell"/>
</dbReference>
<dbReference type="GO" id="GO:0045275">
    <property type="term" value="C:respiratory chain complex III"/>
    <property type="evidence" value="ECO:0007669"/>
    <property type="project" value="InterPro"/>
</dbReference>
<dbReference type="GO" id="GO:0046872">
    <property type="term" value="F:metal ion binding"/>
    <property type="evidence" value="ECO:0007669"/>
    <property type="project" value="UniProtKB-KW"/>
</dbReference>
<dbReference type="GO" id="GO:0008121">
    <property type="term" value="F:ubiquinol-cytochrome-c reductase activity"/>
    <property type="evidence" value="ECO:0007669"/>
    <property type="project" value="InterPro"/>
</dbReference>
<dbReference type="GO" id="GO:0006122">
    <property type="term" value="P:mitochondrial electron transport, ubiquinol to cytochrome c"/>
    <property type="evidence" value="ECO:0007669"/>
    <property type="project" value="TreeGrafter"/>
</dbReference>
<dbReference type="CDD" id="cd00290">
    <property type="entry name" value="cytochrome_b_C"/>
    <property type="match status" value="1"/>
</dbReference>
<dbReference type="CDD" id="cd00284">
    <property type="entry name" value="Cytochrome_b_N"/>
    <property type="match status" value="1"/>
</dbReference>
<dbReference type="FunFam" id="1.20.810.10:FF:000002">
    <property type="entry name" value="Cytochrome b"/>
    <property type="match status" value="1"/>
</dbReference>
<dbReference type="Gene3D" id="1.20.810.10">
    <property type="entry name" value="Cytochrome Bc1 Complex, Chain C"/>
    <property type="match status" value="1"/>
</dbReference>
<dbReference type="InterPro" id="IPR005798">
    <property type="entry name" value="Cyt_b/b6_C"/>
</dbReference>
<dbReference type="InterPro" id="IPR036150">
    <property type="entry name" value="Cyt_b/b6_C_sf"/>
</dbReference>
<dbReference type="InterPro" id="IPR005797">
    <property type="entry name" value="Cyt_b/b6_N"/>
</dbReference>
<dbReference type="InterPro" id="IPR027387">
    <property type="entry name" value="Cytb/b6-like_sf"/>
</dbReference>
<dbReference type="InterPro" id="IPR030689">
    <property type="entry name" value="Cytochrome_b"/>
</dbReference>
<dbReference type="InterPro" id="IPR048260">
    <property type="entry name" value="Cytochrome_b_C_euk/bac"/>
</dbReference>
<dbReference type="InterPro" id="IPR048259">
    <property type="entry name" value="Cytochrome_b_N_euk/bac"/>
</dbReference>
<dbReference type="InterPro" id="IPR016174">
    <property type="entry name" value="Di-haem_cyt_TM"/>
</dbReference>
<dbReference type="PANTHER" id="PTHR19271">
    <property type="entry name" value="CYTOCHROME B"/>
    <property type="match status" value="1"/>
</dbReference>
<dbReference type="PANTHER" id="PTHR19271:SF16">
    <property type="entry name" value="CYTOCHROME B"/>
    <property type="match status" value="1"/>
</dbReference>
<dbReference type="Pfam" id="PF00032">
    <property type="entry name" value="Cytochrom_B_C"/>
    <property type="match status" value="1"/>
</dbReference>
<dbReference type="Pfam" id="PF00033">
    <property type="entry name" value="Cytochrome_B"/>
    <property type="match status" value="1"/>
</dbReference>
<dbReference type="PIRSF" id="PIRSF038885">
    <property type="entry name" value="COB"/>
    <property type="match status" value="1"/>
</dbReference>
<dbReference type="SUPFAM" id="SSF81648">
    <property type="entry name" value="a domain/subunit of cytochrome bc1 complex (Ubiquinol-cytochrome c reductase)"/>
    <property type="match status" value="1"/>
</dbReference>
<dbReference type="SUPFAM" id="SSF81342">
    <property type="entry name" value="Transmembrane di-heme cytochromes"/>
    <property type="match status" value="1"/>
</dbReference>
<dbReference type="PROSITE" id="PS51003">
    <property type="entry name" value="CYTB_CTER"/>
    <property type="match status" value="1"/>
</dbReference>
<dbReference type="PROSITE" id="PS51002">
    <property type="entry name" value="CYTB_NTER"/>
    <property type="match status" value="1"/>
</dbReference>
<organism>
    <name type="scientific">Eubalaena glacialis</name>
    <name type="common">North Atlantic right whale</name>
    <name type="synonym">Balaena biscayensis</name>
    <dbReference type="NCBI Taxonomy" id="27606"/>
    <lineage>
        <taxon>Eukaryota</taxon>
        <taxon>Metazoa</taxon>
        <taxon>Chordata</taxon>
        <taxon>Craniata</taxon>
        <taxon>Vertebrata</taxon>
        <taxon>Euteleostomi</taxon>
        <taxon>Mammalia</taxon>
        <taxon>Eutheria</taxon>
        <taxon>Laurasiatheria</taxon>
        <taxon>Artiodactyla</taxon>
        <taxon>Whippomorpha</taxon>
        <taxon>Cetacea</taxon>
        <taxon>Mysticeti</taxon>
        <taxon>Balaenidae</taxon>
        <taxon>Eubalaena</taxon>
    </lineage>
</organism>
<sequence>MTNIRKTHPLMKIINDAFIDLPTPSNISSWWNFGSLLGLCLIMQILTGLFLAMHYTPDTTTAFSSITHICRDVNYGWIIRYLHANGASMFFICLYAHMGRGLYYGSYAFQETWNIGVILLFTVMATAFVGYVLPWGQMSFWGATVITNLLSAIPYIGNTLVEWIWGGFSVDKATLTRFFAFHFILPFIILALAIVHLLFLHETGSNNPTGIPSNMDKIPFHPYYTIKDILGALLLILTLLMLTLFAPDLLGDPDNYTPANPLSTPAHIKPEWYFLFAYAILRSIPNKLGGVLALLLSILILAFIPMLHTSKQRSMMFRPFSQFLFWVLVADLLTLTWIGGQPVEHPYMIVGQFASILYFLLILVLMPTASLIENKLMKW</sequence>
<gene>
    <name type="primary">MT-CYB</name>
    <name type="synonym">COB</name>
    <name type="synonym">CYTB</name>
    <name type="synonym">MTCYB</name>
</gene>
<geneLocation type="mitochondrion"/>
<keyword id="KW-0249">Electron transport</keyword>
<keyword id="KW-0349">Heme</keyword>
<keyword id="KW-0408">Iron</keyword>
<keyword id="KW-0472">Membrane</keyword>
<keyword id="KW-0479">Metal-binding</keyword>
<keyword id="KW-0496">Mitochondrion</keyword>
<keyword id="KW-0999">Mitochondrion inner membrane</keyword>
<keyword id="KW-0679">Respiratory chain</keyword>
<keyword id="KW-0812">Transmembrane</keyword>
<keyword id="KW-1133">Transmembrane helix</keyword>
<keyword id="KW-0813">Transport</keyword>
<keyword id="KW-0830">Ubiquinone</keyword>
<accession>Q4FBI3</accession>
<accession>P41284</accession>
<accession>Q69B43</accession>
<name>CYB_EUBGL</name>
<comment type="function">
    <text evidence="2">Component of the ubiquinol-cytochrome c reductase complex (complex III or cytochrome b-c1 complex) that is part of the mitochondrial respiratory chain. The b-c1 complex mediates electron transfer from ubiquinol to cytochrome c. Contributes to the generation of a proton gradient across the mitochondrial membrane that is then used for ATP synthesis.</text>
</comment>
<comment type="cofactor">
    <cofactor evidence="2">
        <name>heme b</name>
        <dbReference type="ChEBI" id="CHEBI:60344"/>
    </cofactor>
    <text evidence="2">Binds 2 heme b groups non-covalently.</text>
</comment>
<comment type="subunit">
    <text evidence="2">The cytochrome bc1 complex contains 11 subunits: 3 respiratory subunits (MT-CYB, CYC1 and UQCRFS1), 2 core proteins (UQCRC1 and UQCRC2) and 6 low-molecular weight proteins (UQCRH/QCR6, UQCRB/QCR7, UQCRQ/QCR8, UQCR10/QCR9, UQCR11/QCR10 and a cleavage product of UQCRFS1). This cytochrome bc1 complex then forms a dimer.</text>
</comment>
<comment type="subcellular location">
    <subcellularLocation>
        <location evidence="2">Mitochondrion inner membrane</location>
        <topology evidence="2">Multi-pass membrane protein</topology>
    </subcellularLocation>
</comment>
<comment type="miscellaneous">
    <text evidence="1">Heme 1 (or BL or b562) is low-potential and absorbs at about 562 nm, and heme 2 (or BH or b566) is high-potential and absorbs at about 566 nm.</text>
</comment>
<comment type="similarity">
    <text evidence="3 4">Belongs to the cytochrome b family.</text>
</comment>
<comment type="caution">
    <text evidence="2">The full-length protein contains only eight transmembrane helices, not nine as predicted by bioinformatics tools.</text>
</comment>
<reference key="1">
    <citation type="journal article" date="1994" name="Nature">
        <title>Relationship of baleen whales established by cytochrome b gene sequence comparison.</title>
        <authorList>
            <person name="Arnason U."/>
            <person name="Gullberg A."/>
        </authorList>
    </citation>
    <scope>NUCLEOTIDE SEQUENCE [GENOMIC DNA]</scope>
</reference>
<reference key="2">
    <citation type="journal article" date="2005" name="Mol. Ecol.">
        <title>Population histories of right whales (Cetacea: Eubalaena) inferred from mitochondrial sequence diversities and divergences of their whale lice (Amphipoda: Cyamus).</title>
        <authorList>
            <person name="Kaliszewska Z.A."/>
            <person name="Seger J."/>
            <person name="Rowntree V.J."/>
            <person name="Barco S.G."/>
            <person name="Benegas R."/>
            <person name="Best P.B."/>
            <person name="Brown M.W."/>
            <person name="Brownell R.L. Jr."/>
            <person name="Carribero A."/>
            <person name="Harcourt R."/>
            <person name="Knowlton A.R."/>
            <person name="Marshall-Tilas K."/>
            <person name="Patenaude N.J."/>
            <person name="Rivarola M."/>
            <person name="Schaeff C.M."/>
            <person name="Sironi M."/>
            <person name="Smith W.A."/>
            <person name="Yamada T.K."/>
        </authorList>
    </citation>
    <scope>NUCLEOTIDE SEQUENCE [GENOMIC DNA]</scope>
    <source>
        <strain>Isolate Eg#1014 'Staccato'</strain>
    </source>
</reference>
<reference key="3">
    <citation type="journal article" date="2004" name="Mol. Phylogenet. Evol.">
        <title>Phylogeny of mysticete whales based on mitochondrial and nuclear data.</title>
        <authorList>
            <person name="Rychel A.L."/>
            <person name="Reeder T.W."/>
            <person name="Berta A."/>
        </authorList>
    </citation>
    <scope>NUCLEOTIDE SEQUENCE [GENOMIC DNA]</scope>
</reference>
<feature type="chain" id="PRO_0000247813" description="Cytochrome b">
    <location>
        <begin position="1"/>
        <end position="379"/>
    </location>
</feature>
<feature type="transmembrane region" description="Helical" evidence="2">
    <location>
        <begin position="33"/>
        <end position="53"/>
    </location>
</feature>
<feature type="transmembrane region" description="Helical" evidence="2">
    <location>
        <begin position="77"/>
        <end position="98"/>
    </location>
</feature>
<feature type="transmembrane region" description="Helical" evidence="2">
    <location>
        <begin position="113"/>
        <end position="133"/>
    </location>
</feature>
<feature type="transmembrane region" description="Helical" evidence="2">
    <location>
        <begin position="178"/>
        <end position="198"/>
    </location>
</feature>
<feature type="transmembrane region" description="Helical" evidence="2">
    <location>
        <begin position="226"/>
        <end position="246"/>
    </location>
</feature>
<feature type="transmembrane region" description="Helical" evidence="2">
    <location>
        <begin position="288"/>
        <end position="308"/>
    </location>
</feature>
<feature type="transmembrane region" description="Helical" evidence="2">
    <location>
        <begin position="320"/>
        <end position="340"/>
    </location>
</feature>
<feature type="transmembrane region" description="Helical" evidence="2">
    <location>
        <begin position="347"/>
        <end position="367"/>
    </location>
</feature>
<feature type="binding site" description="axial binding residue" evidence="2">
    <location>
        <position position="83"/>
    </location>
    <ligand>
        <name>heme b</name>
        <dbReference type="ChEBI" id="CHEBI:60344"/>
        <label>b562</label>
    </ligand>
    <ligandPart>
        <name>Fe</name>
        <dbReference type="ChEBI" id="CHEBI:18248"/>
    </ligandPart>
</feature>
<feature type="binding site" description="axial binding residue" evidence="2">
    <location>
        <position position="97"/>
    </location>
    <ligand>
        <name>heme b</name>
        <dbReference type="ChEBI" id="CHEBI:60344"/>
        <label>b566</label>
    </ligand>
    <ligandPart>
        <name>Fe</name>
        <dbReference type="ChEBI" id="CHEBI:18248"/>
    </ligandPart>
</feature>
<feature type="binding site" description="axial binding residue" evidence="2">
    <location>
        <position position="182"/>
    </location>
    <ligand>
        <name>heme b</name>
        <dbReference type="ChEBI" id="CHEBI:60344"/>
        <label>b562</label>
    </ligand>
    <ligandPart>
        <name>Fe</name>
        <dbReference type="ChEBI" id="CHEBI:18248"/>
    </ligandPart>
</feature>
<feature type="binding site" description="axial binding residue" evidence="2">
    <location>
        <position position="196"/>
    </location>
    <ligand>
        <name>heme b</name>
        <dbReference type="ChEBI" id="CHEBI:60344"/>
        <label>b566</label>
    </ligand>
    <ligandPart>
        <name>Fe</name>
        <dbReference type="ChEBI" id="CHEBI:18248"/>
    </ligandPart>
</feature>
<feature type="binding site" evidence="2">
    <location>
        <position position="201"/>
    </location>
    <ligand>
        <name>a ubiquinone</name>
        <dbReference type="ChEBI" id="CHEBI:16389"/>
    </ligand>
</feature>
<feature type="sequence conflict" description="In Ref. 2; AAZ05878." evidence="5" ref="2">
    <original>M</original>
    <variation>V</variation>
    <location>
        <position position="348"/>
    </location>
</feature>
<protein>
    <recommendedName>
        <fullName>Cytochrome b</fullName>
    </recommendedName>
    <alternativeName>
        <fullName>Complex III subunit 3</fullName>
    </alternativeName>
    <alternativeName>
        <fullName>Complex III subunit III</fullName>
    </alternativeName>
    <alternativeName>
        <fullName>Cytochrome b-c1 complex subunit 3</fullName>
    </alternativeName>
    <alternativeName>
        <fullName>Ubiquinol-cytochrome-c reductase complex cytochrome b subunit</fullName>
    </alternativeName>
</protein>
<evidence type="ECO:0000250" key="1"/>
<evidence type="ECO:0000250" key="2">
    <source>
        <dbReference type="UniProtKB" id="P00157"/>
    </source>
</evidence>
<evidence type="ECO:0000255" key="3">
    <source>
        <dbReference type="PROSITE-ProRule" id="PRU00967"/>
    </source>
</evidence>
<evidence type="ECO:0000255" key="4">
    <source>
        <dbReference type="PROSITE-ProRule" id="PRU00968"/>
    </source>
</evidence>
<evidence type="ECO:0000305" key="5"/>